<name>TILS_SALA4</name>
<comment type="function">
    <text evidence="1">Ligates lysine onto the cytidine present at position 34 of the AUA codon-specific tRNA(Ile) that contains the anticodon CAU, in an ATP-dependent manner. Cytidine is converted to lysidine, thus changing the amino acid specificity of the tRNA from methionine to isoleucine.</text>
</comment>
<comment type="catalytic activity">
    <reaction evidence="1">
        <text>cytidine(34) in tRNA(Ile2) + L-lysine + ATP = lysidine(34) in tRNA(Ile2) + AMP + diphosphate + H(+)</text>
        <dbReference type="Rhea" id="RHEA:43744"/>
        <dbReference type="Rhea" id="RHEA-COMP:10625"/>
        <dbReference type="Rhea" id="RHEA-COMP:10670"/>
        <dbReference type="ChEBI" id="CHEBI:15378"/>
        <dbReference type="ChEBI" id="CHEBI:30616"/>
        <dbReference type="ChEBI" id="CHEBI:32551"/>
        <dbReference type="ChEBI" id="CHEBI:33019"/>
        <dbReference type="ChEBI" id="CHEBI:82748"/>
        <dbReference type="ChEBI" id="CHEBI:83665"/>
        <dbReference type="ChEBI" id="CHEBI:456215"/>
        <dbReference type="EC" id="6.3.4.19"/>
    </reaction>
</comment>
<comment type="subcellular location">
    <subcellularLocation>
        <location evidence="1">Cytoplasm</location>
    </subcellularLocation>
</comment>
<comment type="domain">
    <text>The N-terminal region contains the highly conserved SGGXDS motif, predicted to be a P-loop motif involved in ATP binding.</text>
</comment>
<comment type="similarity">
    <text evidence="1">Belongs to the tRNA(Ile)-lysidine synthase family.</text>
</comment>
<protein>
    <recommendedName>
        <fullName evidence="1">tRNA(Ile)-lysidine synthase</fullName>
        <ecNumber evidence="1">6.3.4.19</ecNumber>
    </recommendedName>
    <alternativeName>
        <fullName evidence="1">tRNA(Ile)-2-lysyl-cytidine synthase</fullName>
    </alternativeName>
    <alternativeName>
        <fullName evidence="1">tRNA(Ile)-lysidine synthetase</fullName>
    </alternativeName>
</protein>
<feature type="chain" id="PRO_1000164326" description="tRNA(Ile)-lysidine synthase">
    <location>
        <begin position="1"/>
        <end position="430"/>
    </location>
</feature>
<feature type="binding site" evidence="1">
    <location>
        <begin position="21"/>
        <end position="26"/>
    </location>
    <ligand>
        <name>ATP</name>
        <dbReference type="ChEBI" id="CHEBI:30616"/>
    </ligand>
</feature>
<accession>B5F8V0</accession>
<gene>
    <name evidence="1" type="primary">tilS</name>
    <name type="ordered locus">SeAg_B0277</name>
</gene>
<organism>
    <name type="scientific">Salmonella agona (strain SL483)</name>
    <dbReference type="NCBI Taxonomy" id="454166"/>
    <lineage>
        <taxon>Bacteria</taxon>
        <taxon>Pseudomonadati</taxon>
        <taxon>Pseudomonadota</taxon>
        <taxon>Gammaproteobacteria</taxon>
        <taxon>Enterobacterales</taxon>
        <taxon>Enterobacteriaceae</taxon>
        <taxon>Salmonella</taxon>
    </lineage>
</organism>
<sequence>MTTLTLNTSLLSSRRILAAFSGGLDSTVLLHQLVLWRERHPDVTLRAIHIHHGLSPHADSWVRHCETVCERWQVPLVVERVTLADNGLGIEAHAREARYRAFAQTLLPGEVLATAQHLDDQCETFLLALKRGSGPAGLSAMGERSPFAGTLLLRPLLRETRKTLEQWAVRHGLCWIEDESNQDDAYDRNFLRLRALPLLQQRWPHFPAAVARSATLCAEQERLLDELLASDLTDCITTEGTLRLSPLMSMSDVRRAAILRRWLAMRNAPMPSRDALERIWQEVALARDDASPCLRFGDREIRRYQSQLWWIKSVAGQHETTVAWPVWQTPLALPAGLGTVQLVPGGELRRPREEESVSIRFKAPGLLHIVGRHGGRKLKKIWQEQGIPPWRRDTTPLLFYGETLIAAAGVFVTREGAAEDKEGVSLVWHA</sequence>
<dbReference type="EC" id="6.3.4.19" evidence="1"/>
<dbReference type="EMBL" id="CP001138">
    <property type="protein sequence ID" value="ACH50480.1"/>
    <property type="molecule type" value="Genomic_DNA"/>
</dbReference>
<dbReference type="RefSeq" id="WP_000210063.1">
    <property type="nucleotide sequence ID" value="NC_011149.1"/>
</dbReference>
<dbReference type="SMR" id="B5F8V0"/>
<dbReference type="KEGG" id="sea:SeAg_B0277"/>
<dbReference type="HOGENOM" id="CLU_018869_2_0_6"/>
<dbReference type="Proteomes" id="UP000008819">
    <property type="component" value="Chromosome"/>
</dbReference>
<dbReference type="GO" id="GO:0005737">
    <property type="term" value="C:cytoplasm"/>
    <property type="evidence" value="ECO:0007669"/>
    <property type="project" value="UniProtKB-SubCell"/>
</dbReference>
<dbReference type="GO" id="GO:0005524">
    <property type="term" value="F:ATP binding"/>
    <property type="evidence" value="ECO:0007669"/>
    <property type="project" value="UniProtKB-UniRule"/>
</dbReference>
<dbReference type="GO" id="GO:0032267">
    <property type="term" value="F:tRNA(Ile)-lysidine synthase activity"/>
    <property type="evidence" value="ECO:0007669"/>
    <property type="project" value="UniProtKB-EC"/>
</dbReference>
<dbReference type="GO" id="GO:0006400">
    <property type="term" value="P:tRNA modification"/>
    <property type="evidence" value="ECO:0007669"/>
    <property type="project" value="UniProtKB-UniRule"/>
</dbReference>
<dbReference type="CDD" id="cd01992">
    <property type="entry name" value="TilS_N"/>
    <property type="match status" value="1"/>
</dbReference>
<dbReference type="FunFam" id="3.40.50.620:FF:000173">
    <property type="entry name" value="tRNA(Ile)-lysidine synthase"/>
    <property type="match status" value="1"/>
</dbReference>
<dbReference type="Gene3D" id="1.20.59.20">
    <property type="match status" value="1"/>
</dbReference>
<dbReference type="Gene3D" id="3.40.50.620">
    <property type="entry name" value="HUPs"/>
    <property type="match status" value="1"/>
</dbReference>
<dbReference type="HAMAP" id="MF_01161">
    <property type="entry name" value="tRNA_Ile_lys_synt"/>
    <property type="match status" value="1"/>
</dbReference>
<dbReference type="InterPro" id="IPR012796">
    <property type="entry name" value="Lysidine-tRNA-synth_C"/>
</dbReference>
<dbReference type="InterPro" id="IPR014729">
    <property type="entry name" value="Rossmann-like_a/b/a_fold"/>
</dbReference>
<dbReference type="InterPro" id="IPR011063">
    <property type="entry name" value="TilS/TtcA_N"/>
</dbReference>
<dbReference type="InterPro" id="IPR012094">
    <property type="entry name" value="tRNA_Ile_lys_synt"/>
</dbReference>
<dbReference type="InterPro" id="IPR012795">
    <property type="entry name" value="tRNA_Ile_lys_synt_N"/>
</dbReference>
<dbReference type="InterPro" id="IPR015262">
    <property type="entry name" value="tRNA_Ile_lys_synt_subst-bd"/>
</dbReference>
<dbReference type="NCBIfam" id="TIGR02433">
    <property type="entry name" value="lysidine_TilS_C"/>
    <property type="match status" value="1"/>
</dbReference>
<dbReference type="NCBIfam" id="TIGR02432">
    <property type="entry name" value="lysidine_TilS_N"/>
    <property type="match status" value="1"/>
</dbReference>
<dbReference type="NCBIfam" id="NF007942">
    <property type="entry name" value="PRK10660.1"/>
    <property type="match status" value="1"/>
</dbReference>
<dbReference type="PANTHER" id="PTHR43033">
    <property type="entry name" value="TRNA(ILE)-LYSIDINE SYNTHASE-RELATED"/>
    <property type="match status" value="1"/>
</dbReference>
<dbReference type="PANTHER" id="PTHR43033:SF1">
    <property type="entry name" value="TRNA(ILE)-LYSIDINE SYNTHASE-RELATED"/>
    <property type="match status" value="1"/>
</dbReference>
<dbReference type="Pfam" id="PF01171">
    <property type="entry name" value="ATP_bind_3"/>
    <property type="match status" value="1"/>
</dbReference>
<dbReference type="Pfam" id="PF09179">
    <property type="entry name" value="TilS"/>
    <property type="match status" value="1"/>
</dbReference>
<dbReference type="Pfam" id="PF11734">
    <property type="entry name" value="TilS_C"/>
    <property type="match status" value="1"/>
</dbReference>
<dbReference type="SMART" id="SM00977">
    <property type="entry name" value="TilS_C"/>
    <property type="match status" value="1"/>
</dbReference>
<dbReference type="SUPFAM" id="SSF52402">
    <property type="entry name" value="Adenine nucleotide alpha hydrolases-like"/>
    <property type="match status" value="1"/>
</dbReference>
<dbReference type="SUPFAM" id="SSF82829">
    <property type="entry name" value="MesJ substrate recognition domain-like"/>
    <property type="match status" value="1"/>
</dbReference>
<dbReference type="SUPFAM" id="SSF56037">
    <property type="entry name" value="PheT/TilS domain"/>
    <property type="match status" value="1"/>
</dbReference>
<proteinExistence type="inferred from homology"/>
<keyword id="KW-0067">ATP-binding</keyword>
<keyword id="KW-0963">Cytoplasm</keyword>
<keyword id="KW-0436">Ligase</keyword>
<keyword id="KW-0547">Nucleotide-binding</keyword>
<keyword id="KW-0819">tRNA processing</keyword>
<evidence type="ECO:0000255" key="1">
    <source>
        <dbReference type="HAMAP-Rule" id="MF_01161"/>
    </source>
</evidence>
<reference key="1">
    <citation type="journal article" date="2011" name="J. Bacteriol.">
        <title>Comparative genomics of 28 Salmonella enterica isolates: evidence for CRISPR-mediated adaptive sublineage evolution.</title>
        <authorList>
            <person name="Fricke W.F."/>
            <person name="Mammel M.K."/>
            <person name="McDermott P.F."/>
            <person name="Tartera C."/>
            <person name="White D.G."/>
            <person name="Leclerc J.E."/>
            <person name="Ravel J."/>
            <person name="Cebula T.A."/>
        </authorList>
    </citation>
    <scope>NUCLEOTIDE SEQUENCE [LARGE SCALE GENOMIC DNA]</scope>
    <source>
        <strain>SL483</strain>
    </source>
</reference>